<protein>
    <recommendedName>
        <fullName>Phosphoprotein</fullName>
        <shortName>Protein P</shortName>
    </recommendedName>
    <alternativeName>
        <fullName>Protein M1</fullName>
    </alternativeName>
</protein>
<comment type="function">
    <text evidence="1 2">Non catalytic polymerase cofactor and regulatory protein that plays a role in viral transcription and replication. Stabilizes the RNA polymerase L to the N-RNA template and binds the soluble protein N, preventing it from encapsidating non-genomic RNA. Also inhibits host IFN-alpha and IFN-beta signaling by binding and retaining phosphorylated STAT1 in the cytoplasm or by inhibiting the DNA binding of STAT1 in the nucleus. Might be involved, through interaction with host dynein, in intracellular microtubule-dependent virus transport of incoming virus from the synapse toward the cell body (By similarity). Inhibits interferon induction pathways by interacting with host TBK1 and preventing the formation of dynamic cytoplasmic condensates that have liquid properties and that are essential for interferon production (By similarity).</text>
</comment>
<comment type="subunit">
    <molecule>Phosphoprotein</molecule>
    <text evidence="2">Homotrimer when phosphorylated. This trimer is stabilized by binding to the L protein. Binds soluble protein N, and ribonucleocapsid. Interacts with host DYNLL1 and DYNLL2; this interaction may play a role in intracellular microtubule-dependent virus transport of incoming virus. Interacts with host STAT1, STAT2 and PML. Interacts with host TBK1.</text>
</comment>
<comment type="subunit">
    <molecule>Isoform P3</molecule>
    <text evidence="1">Binds host PML.</text>
</comment>
<comment type="subcellular location">
    <molecule>Phosphoprotein</molecule>
    <subcellularLocation>
        <location>Virion</location>
    </subcellularLocation>
    <subcellularLocation>
        <location evidence="1">Host cytoplasm</location>
    </subcellularLocation>
</comment>
<comment type="subcellular location">
    <molecule>Isoform P2</molecule>
    <subcellularLocation>
        <location evidence="1">Host cytoplasm</location>
    </subcellularLocation>
</comment>
<comment type="subcellular location">
    <molecule>Isoform P3</molecule>
    <subcellularLocation>
        <location evidence="1">Host nucleus</location>
    </subcellularLocation>
</comment>
<comment type="subcellular location">
    <molecule>Isoform P4</molecule>
    <subcellularLocation>
        <location evidence="1">Host nucleus</location>
    </subcellularLocation>
</comment>
<comment type="subcellular location">
    <molecule>Isoform P5</molecule>
    <subcellularLocation>
        <location evidence="1">Host nucleus</location>
    </subcellularLocation>
</comment>
<comment type="alternative products">
    <event type="alternative initiation"/>
    <isoform>
        <id>Q9IPJ8-1</id>
        <name>P</name>
        <sequence type="displayed"/>
    </isoform>
    <isoform>
        <id>Q9IPJ8-2</id>
        <name>P2</name>
        <sequence type="described" ref="VSP_026916"/>
    </isoform>
    <isoform>
        <id>Q9IPJ8-3</id>
        <name>P3</name>
        <sequence type="described" ref="VSP_026915"/>
    </isoform>
    <isoform>
        <id>Q9IPJ8-4</id>
        <name>P4</name>
        <sequence type="described" ref="VSP_026914"/>
    </isoform>
    <isoform>
        <id>Q9IPJ8-5</id>
        <name>P5</name>
        <sequence type="described" ref="VSP_026913"/>
    </isoform>
</comment>
<comment type="PTM">
    <text evidence="1">Phosphorylated by host PKC and by an unknown kinase.</text>
</comment>
<comment type="similarity">
    <text evidence="4">Belongs to the lyssavirus protein P family.</text>
</comment>
<keyword id="KW-0002">3D-structure</keyword>
<keyword id="KW-0024">Alternative initiation</keyword>
<keyword id="KW-0143">Chaperone</keyword>
<keyword id="KW-1176">Cytoplasmic inwards viral transport</keyword>
<keyword id="KW-1035">Host cytoplasm</keyword>
<keyword id="KW-1048">Host nucleus</keyword>
<keyword id="KW-0945">Host-virus interaction</keyword>
<keyword id="KW-1090">Inhibition of host innate immune response by virus</keyword>
<keyword id="KW-1114">Inhibition of host interferon signaling pathway by virus</keyword>
<keyword id="KW-1105">Inhibition of host STAT1 by virus</keyword>
<keyword id="KW-1106">Inhibition of host STAT2 by virus</keyword>
<keyword id="KW-1223">Inhibition of host TBK1 by virus</keyword>
<keyword id="KW-1225">Inhibition of host TLR pathway by virus</keyword>
<keyword id="KW-0922">Interferon antiviral system evasion</keyword>
<keyword id="KW-1177">Microtubular inwards viral transport</keyword>
<keyword id="KW-0597">Phosphoprotein</keyword>
<keyword id="KW-0899">Viral immunoevasion</keyword>
<keyword id="KW-0693">Viral RNA replication</keyword>
<keyword id="KW-0946">Virion</keyword>
<keyword id="KW-1160">Virus entry into host cell</keyword>
<dbReference type="EMBL" id="AB044824">
    <property type="protein sequence ID" value="BAA96803.1"/>
    <property type="molecule type" value="Genomic_RNA"/>
</dbReference>
<dbReference type="EMBL" id="AB009663">
    <property type="protein sequence ID" value="BAA24084.1"/>
    <property type="molecule type" value="Genomic_RNA"/>
</dbReference>
<dbReference type="EMBL" id="AB128149">
    <property type="protein sequence ID" value="BAD04911.1"/>
    <property type="molecule type" value="Genomic_RNA"/>
</dbReference>
<dbReference type="PIR" id="B58460">
    <property type="entry name" value="B58460"/>
</dbReference>
<dbReference type="PDB" id="7C20">
    <property type="method" value="X-ray"/>
    <property type="resolution" value="3.00 A"/>
    <property type="chains" value="A=186-297"/>
</dbReference>
<dbReference type="PDB" id="7T5G">
    <property type="method" value="X-ray"/>
    <property type="resolution" value="1.70 A"/>
    <property type="chains" value="A/B=186-297"/>
</dbReference>
<dbReference type="PDB" id="7T5H">
    <property type="method" value="X-ray"/>
    <property type="resolution" value="1.50 A"/>
    <property type="chains" value="A=186-297"/>
</dbReference>
<dbReference type="PDBsum" id="7C20"/>
<dbReference type="PDBsum" id="7T5G"/>
<dbReference type="PDBsum" id="7T5H"/>
<dbReference type="SASBDB" id="Q9IPJ8"/>
<dbReference type="SMR" id="Q9IPJ8"/>
<dbReference type="Proteomes" id="UP000006366">
    <property type="component" value="Genome"/>
</dbReference>
<dbReference type="Proteomes" id="UP000007309">
    <property type="component" value="Genome"/>
</dbReference>
<dbReference type="Proteomes" id="UP000007310">
    <property type="component" value="Genome"/>
</dbReference>
<dbReference type="GO" id="GO:0043657">
    <property type="term" value="C:host cell"/>
    <property type="evidence" value="ECO:0007669"/>
    <property type="project" value="GOC"/>
</dbReference>
<dbReference type="GO" id="GO:0030430">
    <property type="term" value="C:host cell cytoplasm"/>
    <property type="evidence" value="ECO:0007669"/>
    <property type="project" value="UniProtKB-SubCell"/>
</dbReference>
<dbReference type="GO" id="GO:0042025">
    <property type="term" value="C:host cell nucleus"/>
    <property type="evidence" value="ECO:0007669"/>
    <property type="project" value="UniProtKB-SubCell"/>
</dbReference>
<dbReference type="GO" id="GO:0044423">
    <property type="term" value="C:virion component"/>
    <property type="evidence" value="ECO:0007669"/>
    <property type="project" value="UniProtKB-KW"/>
</dbReference>
<dbReference type="GO" id="GO:0003968">
    <property type="term" value="F:RNA-directed RNA polymerase activity"/>
    <property type="evidence" value="ECO:0007669"/>
    <property type="project" value="InterPro"/>
</dbReference>
<dbReference type="GO" id="GO:0075521">
    <property type="term" value="P:microtubule-dependent intracellular transport of viral material towards nucleus"/>
    <property type="evidence" value="ECO:0007669"/>
    <property type="project" value="UniProtKB-KW"/>
</dbReference>
<dbReference type="GO" id="GO:0046718">
    <property type="term" value="P:symbiont entry into host cell"/>
    <property type="evidence" value="ECO:0007669"/>
    <property type="project" value="UniProtKB-KW"/>
</dbReference>
<dbReference type="GO" id="GO:0039723">
    <property type="term" value="P:symbiont-mediated suppression of host cytoplasmic pattern recognition receptor signaling pathway via inhibition of TBK1 activity"/>
    <property type="evidence" value="ECO:0007669"/>
    <property type="project" value="UniProtKB-KW"/>
</dbReference>
<dbReference type="GO" id="GO:0039563">
    <property type="term" value="P:symbiont-mediated suppression of host JAK-STAT cascade via inhibition of STAT1 activity"/>
    <property type="evidence" value="ECO:0007669"/>
    <property type="project" value="UniProtKB-KW"/>
</dbReference>
<dbReference type="GO" id="GO:0039564">
    <property type="term" value="P:symbiont-mediated suppression of host JAK-STAT cascade via inhibition of STAT2 activity"/>
    <property type="evidence" value="ECO:0007669"/>
    <property type="project" value="UniProtKB-KW"/>
</dbReference>
<dbReference type="GO" id="GO:0039722">
    <property type="term" value="P:symbiont-mediated suppression of host toll-like receptor signaling pathway"/>
    <property type="evidence" value="ECO:0007669"/>
    <property type="project" value="UniProtKB-KW"/>
</dbReference>
<dbReference type="GO" id="GO:0039502">
    <property type="term" value="P:symbiont-mediated suppression of host type I interferon-mediated signaling pathway"/>
    <property type="evidence" value="ECO:0007669"/>
    <property type="project" value="UniProtKB-KW"/>
</dbReference>
<dbReference type="GO" id="GO:0019083">
    <property type="term" value="P:viral transcription"/>
    <property type="evidence" value="ECO:0007669"/>
    <property type="project" value="InterPro"/>
</dbReference>
<dbReference type="CDD" id="cd21032">
    <property type="entry name" value="RABV_P-protein-C_like"/>
    <property type="match status" value="1"/>
</dbReference>
<dbReference type="FunFam" id="1.20.120.820:FF:000001">
    <property type="entry name" value="Phosphoprotein"/>
    <property type="match status" value="1"/>
</dbReference>
<dbReference type="Gene3D" id="6.10.140.1560">
    <property type="match status" value="1"/>
</dbReference>
<dbReference type="Gene3D" id="1.20.120.820">
    <property type="entry name" value="Phosphoprotein, C-terminal domain"/>
    <property type="match status" value="1"/>
</dbReference>
<dbReference type="InterPro" id="IPR004259">
    <property type="entry name" value="PP_M1-like"/>
</dbReference>
<dbReference type="InterPro" id="IPR037199">
    <property type="entry name" value="PP_M1_C"/>
</dbReference>
<dbReference type="InterPro" id="IPR049506">
    <property type="entry name" value="RABV_P-like_C"/>
</dbReference>
<dbReference type="Pfam" id="PF03012">
    <property type="entry name" value="PP_M1"/>
    <property type="match status" value="1"/>
</dbReference>
<dbReference type="SUPFAM" id="SSF118173">
    <property type="entry name" value="Phosphoprotein M1, C-terminal domain"/>
    <property type="match status" value="1"/>
</dbReference>
<proteinExistence type="evidence at protein level"/>
<evidence type="ECO:0000250" key="1"/>
<evidence type="ECO:0000250" key="2">
    <source>
        <dbReference type="UniProtKB" id="P16286"/>
    </source>
</evidence>
<evidence type="ECO:0000256" key="3">
    <source>
        <dbReference type="SAM" id="MobiDB-lite"/>
    </source>
</evidence>
<evidence type="ECO:0000305" key="4"/>
<evidence type="ECO:0007829" key="5">
    <source>
        <dbReference type="PDB" id="7T5H"/>
    </source>
</evidence>
<gene>
    <name type="primary">P</name>
</gene>
<feature type="chain" id="PRO_0000295254" description="Phosphoprotein">
    <location>
        <begin position="1"/>
        <end position="297"/>
    </location>
</feature>
<feature type="region of interest" description="Disordered" evidence="3">
    <location>
        <begin position="57"/>
        <end position="82"/>
    </location>
</feature>
<feature type="region of interest" description="Disordered" evidence="3">
    <location>
        <begin position="132"/>
        <end position="189"/>
    </location>
</feature>
<feature type="region of interest" description="DYNLL1 and DYNLL2 binding" evidence="1">
    <location>
        <begin position="138"/>
        <end position="172"/>
    </location>
</feature>
<feature type="short sequence motif" description="Nuclear export signal" evidence="1">
    <location>
        <begin position="49"/>
        <end position="58"/>
    </location>
</feature>
<feature type="short sequence motif" description="Nuclear localization signal" evidence="1">
    <location>
        <begin position="211"/>
        <end position="214"/>
    </location>
</feature>
<feature type="compositionally biased region" description="Basic and acidic residues" evidence="3">
    <location>
        <begin position="71"/>
        <end position="80"/>
    </location>
</feature>
<feature type="compositionally biased region" description="Polar residues" evidence="3">
    <location>
        <begin position="158"/>
        <end position="180"/>
    </location>
</feature>
<feature type="modified residue" description="Phosphoserine; by host PKC" evidence="1">
    <location>
        <position position="162"/>
    </location>
</feature>
<feature type="modified residue" description="Phosphoserine; by host PKC" evidence="1">
    <location>
        <position position="210"/>
    </location>
</feature>
<feature type="modified residue" description="Phosphoserine; by host PKC" evidence="1">
    <location>
        <position position="271"/>
    </location>
</feature>
<feature type="splice variant" id="VSP_026913" description="In isoform P5." evidence="4">
    <location>
        <begin position="1"/>
        <end position="82"/>
    </location>
</feature>
<feature type="splice variant" id="VSP_026914" description="In isoform P4." evidence="4">
    <location>
        <begin position="1"/>
        <end position="68"/>
    </location>
</feature>
<feature type="splice variant" id="VSP_026915" description="In isoform P3." evidence="4">
    <location>
        <begin position="1"/>
        <end position="52"/>
    </location>
</feature>
<feature type="splice variant" id="VSP_026916" description="In isoform P2." evidence="4">
    <location>
        <begin position="1"/>
        <end position="19"/>
    </location>
</feature>
<feature type="sequence variant" description="In strain: RC-HL.">
    <original>L</original>
    <variation>M</variation>
    <location>
        <position position="15"/>
    </location>
</feature>
<feature type="sequence variant" description="In strain: Ni-CE.">
    <original>LHL</original>
    <variation>PHP</variation>
    <location>
        <begin position="56"/>
        <end position="58"/>
    </location>
</feature>
<feature type="sequence variant" description="In strain: RC-HL.">
    <original>L</original>
    <variation>I</variation>
    <location>
        <position position="56"/>
    </location>
</feature>
<feature type="sequence variant" description="In strain: RC-HL.">
    <original>D</original>
    <variation>Y</variation>
    <location>
        <position position="60"/>
    </location>
</feature>
<feature type="sequence variant" description="In strain: Ni-CE.">
    <original>L</original>
    <variation>P</variation>
    <location>
        <position position="66"/>
    </location>
</feature>
<feature type="sequence variant" description="In strain: Ni-CE.">
    <original>F</original>
    <variation>P</variation>
    <location>
        <position position="81"/>
    </location>
</feature>
<feature type="sequence variant" description="In strain: RC-HL.">
    <original>V</original>
    <variation>I</variation>
    <location>
        <position position="100"/>
    </location>
</feature>
<feature type="sequence variant" description="In strain: RC-HL.">
    <original>T</original>
    <variation>I</variation>
    <location>
        <position position="148"/>
    </location>
</feature>
<feature type="sequence variant" description="In strain: RC-HL.">
    <original>K</original>
    <variation>A</variation>
    <location>
        <position position="165"/>
    </location>
</feature>
<feature type="sequence variant" description="In strain: Ni-CE.">
    <original>N</original>
    <variation>H</variation>
    <location>
        <position position="226"/>
    </location>
</feature>
<feature type="helix" evidence="5">
    <location>
        <begin position="191"/>
        <end position="207"/>
    </location>
</feature>
<feature type="turn" evidence="5">
    <location>
        <begin position="208"/>
        <end position="210"/>
    </location>
</feature>
<feature type="strand" evidence="5">
    <location>
        <begin position="213"/>
        <end position="225"/>
    </location>
</feature>
<feature type="helix" evidence="5">
    <location>
        <begin position="227"/>
        <end position="230"/>
    </location>
</feature>
<feature type="helix" evidence="5">
    <location>
        <begin position="234"/>
        <end position="241"/>
    </location>
</feature>
<feature type="helix" evidence="5">
    <location>
        <begin position="247"/>
        <end position="252"/>
    </location>
</feature>
<feature type="helix" evidence="5">
    <location>
        <begin position="259"/>
        <end position="270"/>
    </location>
</feature>
<feature type="helix" evidence="5">
    <location>
        <begin position="272"/>
        <end position="277"/>
    </location>
</feature>
<feature type="helix" evidence="5">
    <location>
        <begin position="280"/>
        <end position="295"/>
    </location>
</feature>
<reference key="1">
    <citation type="journal article" date="2001" name="Microbiol. Immunol.">
        <title>A comparison of complete genome sequences of the attenuated RC-HL strain of rabies virus used for production of animal vaccine in Japan, and the parental Nishigahara strain.</title>
        <authorList>
            <person name="Ito N."/>
            <person name="Kakemizu M."/>
            <person name="Ito K.A."/>
            <person name="Yamamoto A."/>
            <person name="Yoshida Y."/>
            <person name="Sugiyama M."/>
            <person name="Minamoto N."/>
        </authorList>
    </citation>
    <scope>NUCLEOTIDE SEQUENCE [GENOMIC RNA]</scope>
    <source>
        <strain>Nishigahara</strain>
        <strain>RC-HL</strain>
    </source>
</reference>
<reference key="2">
    <citation type="journal article" date="2007" name="Virus Res.">
        <title>Involvement of nucleoprotein, phosphoprotein, and matrix protein genes of rabies virus in virulence for adult mice.</title>
        <authorList>
            <person name="Shimizu K."/>
            <person name="Ito N."/>
            <person name="Mita T."/>
            <person name="Yamada K."/>
            <person name="Hosokawa-Muto J."/>
            <person name="Sugiyama M."/>
            <person name="Minamoto N."/>
        </authorList>
    </citation>
    <scope>NUCLEOTIDE SEQUENCE [GENOMIC RNA]</scope>
    <source>
        <strain>Ni-CE</strain>
    </source>
</reference>
<accession>Q9IPJ8</accession>
<accession>O55595</accession>
<accession>Q75T11</accession>
<organismHost>
    <name type="scientific">Homo sapiens</name>
    <name type="common">Human</name>
    <dbReference type="NCBI Taxonomy" id="9606"/>
</organismHost>
<organismHost>
    <name type="scientific">Mammalia</name>
    <dbReference type="NCBI Taxonomy" id="40674"/>
</organismHost>
<name>PHOSP_RABVN</name>
<sequence length="297" mass="33326">MSKIFVNPSAIRAGLADLEMAEETVDLINRNIEDNQAHLQGEPIEVDSLPEDMSRLHLDDGKLPDLGRMSKAGEGRHQEDFQMDEGEDPSLLFQSYLDNVGVQIVRQMRSGERFLKIWSQTVEEIISYVTVNFPNPSGRSSEDKSTQTTSQEPKKETTSTPSQRKSQSLKSRTMAQTASGPPSLEWSATNEEDDLSVEAEIAHQIAESFSKKYKFPSRSSGIFLYNFEQLKMNLDDIVKEAKNVPGVTRLAHDGSKLPLRCVLGWVALANSKKFQLLVEANKLNKIMQDDLNRYASC</sequence>
<organism>
    <name type="scientific">Rabies virus (strain Nishigahara RCEH)</name>
    <name type="common">RABV</name>
    <dbReference type="NCBI Taxonomy" id="11298"/>
    <lineage>
        <taxon>Viruses</taxon>
        <taxon>Riboviria</taxon>
        <taxon>Orthornavirae</taxon>
        <taxon>Negarnaviricota</taxon>
        <taxon>Haploviricotina</taxon>
        <taxon>Monjiviricetes</taxon>
        <taxon>Mononegavirales</taxon>
        <taxon>Rhabdoviridae</taxon>
        <taxon>Alpharhabdovirinae</taxon>
        <taxon>Lyssavirus</taxon>
        <taxon>Lyssavirus rabies</taxon>
    </lineage>
</organism>